<organism>
    <name type="scientific">Desulforudis audaxviator (strain MP104C)</name>
    <dbReference type="NCBI Taxonomy" id="477974"/>
    <lineage>
        <taxon>Bacteria</taxon>
        <taxon>Bacillati</taxon>
        <taxon>Bacillota</taxon>
        <taxon>Clostridia</taxon>
        <taxon>Thermoanaerobacterales</taxon>
        <taxon>Candidatus Desulforudaceae</taxon>
        <taxon>Candidatus Desulforudis</taxon>
    </lineage>
</organism>
<proteinExistence type="inferred from homology"/>
<name>UPPP_DESAP</name>
<evidence type="ECO:0000255" key="1">
    <source>
        <dbReference type="HAMAP-Rule" id="MF_01006"/>
    </source>
</evidence>
<protein>
    <recommendedName>
        <fullName evidence="1">Undecaprenyl-diphosphatase</fullName>
        <ecNumber evidence="1">3.6.1.27</ecNumber>
    </recommendedName>
    <alternativeName>
        <fullName evidence="1">Bacitracin resistance protein</fullName>
    </alternativeName>
    <alternativeName>
        <fullName evidence="1">Undecaprenyl pyrophosphate phosphatase</fullName>
    </alternativeName>
</protein>
<gene>
    <name evidence="1" type="primary">uppP</name>
    <name type="ordered locus">Daud_0835</name>
</gene>
<comment type="function">
    <text evidence="1">Catalyzes the dephosphorylation of undecaprenyl diphosphate (UPP). Confers resistance to bacitracin.</text>
</comment>
<comment type="catalytic activity">
    <reaction evidence="1">
        <text>di-trans,octa-cis-undecaprenyl diphosphate + H2O = di-trans,octa-cis-undecaprenyl phosphate + phosphate + H(+)</text>
        <dbReference type="Rhea" id="RHEA:28094"/>
        <dbReference type="ChEBI" id="CHEBI:15377"/>
        <dbReference type="ChEBI" id="CHEBI:15378"/>
        <dbReference type="ChEBI" id="CHEBI:43474"/>
        <dbReference type="ChEBI" id="CHEBI:58405"/>
        <dbReference type="ChEBI" id="CHEBI:60392"/>
        <dbReference type="EC" id="3.6.1.27"/>
    </reaction>
</comment>
<comment type="subcellular location">
    <subcellularLocation>
        <location evidence="1">Cell membrane</location>
        <topology evidence="1">Multi-pass membrane protein</topology>
    </subcellularLocation>
</comment>
<comment type="miscellaneous">
    <text>Bacitracin is thought to be involved in the inhibition of peptidoglycan synthesis by sequestering undecaprenyl diphosphate, thereby reducing the pool of lipid carrier available.</text>
</comment>
<comment type="similarity">
    <text evidence="1">Belongs to the UppP family.</text>
</comment>
<reference key="1">
    <citation type="submission" date="2007-10" db="EMBL/GenBank/DDBJ databases">
        <title>Complete sequence of chromosome of Desulforudis audaxviator MP104C.</title>
        <authorList>
            <person name="Copeland A."/>
            <person name="Lucas S."/>
            <person name="Lapidus A."/>
            <person name="Barry K."/>
            <person name="Glavina del Rio T."/>
            <person name="Dalin E."/>
            <person name="Tice H."/>
            <person name="Bruce D."/>
            <person name="Pitluck S."/>
            <person name="Lowry S.R."/>
            <person name="Larimer F."/>
            <person name="Land M.L."/>
            <person name="Hauser L."/>
            <person name="Kyrpides N."/>
            <person name="Ivanova N.N."/>
            <person name="Richardson P."/>
        </authorList>
    </citation>
    <scope>NUCLEOTIDE SEQUENCE [LARGE SCALE GENOMIC DNA]</scope>
    <source>
        <strain>MP104C</strain>
    </source>
</reference>
<dbReference type="EC" id="3.6.1.27" evidence="1"/>
<dbReference type="EMBL" id="CP000860">
    <property type="protein sequence ID" value="ACA59349.1"/>
    <property type="molecule type" value="Genomic_DNA"/>
</dbReference>
<dbReference type="RefSeq" id="WP_012301935.1">
    <property type="nucleotide sequence ID" value="NC_010424.1"/>
</dbReference>
<dbReference type="SMR" id="B1I2Y8"/>
<dbReference type="STRING" id="477974.Daud_0835"/>
<dbReference type="KEGG" id="dau:Daud_0835"/>
<dbReference type="eggNOG" id="COG1968">
    <property type="taxonomic scope" value="Bacteria"/>
</dbReference>
<dbReference type="HOGENOM" id="CLU_060296_1_0_9"/>
<dbReference type="OrthoDB" id="9808289at2"/>
<dbReference type="Proteomes" id="UP000008544">
    <property type="component" value="Chromosome"/>
</dbReference>
<dbReference type="GO" id="GO:0005886">
    <property type="term" value="C:plasma membrane"/>
    <property type="evidence" value="ECO:0007669"/>
    <property type="project" value="UniProtKB-SubCell"/>
</dbReference>
<dbReference type="GO" id="GO:0050380">
    <property type="term" value="F:undecaprenyl-diphosphatase activity"/>
    <property type="evidence" value="ECO:0007669"/>
    <property type="project" value="UniProtKB-UniRule"/>
</dbReference>
<dbReference type="GO" id="GO:0071555">
    <property type="term" value="P:cell wall organization"/>
    <property type="evidence" value="ECO:0007669"/>
    <property type="project" value="UniProtKB-KW"/>
</dbReference>
<dbReference type="GO" id="GO:0009252">
    <property type="term" value="P:peptidoglycan biosynthetic process"/>
    <property type="evidence" value="ECO:0007669"/>
    <property type="project" value="UniProtKB-KW"/>
</dbReference>
<dbReference type="GO" id="GO:0008360">
    <property type="term" value="P:regulation of cell shape"/>
    <property type="evidence" value="ECO:0007669"/>
    <property type="project" value="UniProtKB-KW"/>
</dbReference>
<dbReference type="GO" id="GO:0046677">
    <property type="term" value="P:response to antibiotic"/>
    <property type="evidence" value="ECO:0007669"/>
    <property type="project" value="UniProtKB-UniRule"/>
</dbReference>
<dbReference type="HAMAP" id="MF_01006">
    <property type="entry name" value="Undec_diphosphatase"/>
    <property type="match status" value="1"/>
</dbReference>
<dbReference type="InterPro" id="IPR003824">
    <property type="entry name" value="UppP"/>
</dbReference>
<dbReference type="PANTHER" id="PTHR30622">
    <property type="entry name" value="UNDECAPRENYL-DIPHOSPHATASE"/>
    <property type="match status" value="1"/>
</dbReference>
<dbReference type="PANTHER" id="PTHR30622:SF4">
    <property type="entry name" value="UNDECAPRENYL-DIPHOSPHATASE"/>
    <property type="match status" value="1"/>
</dbReference>
<dbReference type="Pfam" id="PF02673">
    <property type="entry name" value="BacA"/>
    <property type="match status" value="1"/>
</dbReference>
<feature type="chain" id="PRO_1000197362" description="Undecaprenyl-diphosphatase">
    <location>
        <begin position="1"/>
        <end position="261"/>
    </location>
</feature>
<feature type="transmembrane region" description="Helical" evidence="1">
    <location>
        <begin position="16"/>
        <end position="36"/>
    </location>
</feature>
<feature type="transmembrane region" description="Helical" evidence="1">
    <location>
        <begin position="40"/>
        <end position="60"/>
    </location>
</feature>
<feature type="transmembrane region" description="Helical" evidence="1">
    <location>
        <begin position="82"/>
        <end position="102"/>
    </location>
</feature>
<feature type="transmembrane region" description="Helical" evidence="1">
    <location>
        <begin position="107"/>
        <end position="127"/>
    </location>
</feature>
<feature type="transmembrane region" description="Helical" evidence="1">
    <location>
        <begin position="140"/>
        <end position="160"/>
    </location>
</feature>
<feature type="transmembrane region" description="Helical" evidence="1">
    <location>
        <begin position="183"/>
        <end position="203"/>
    </location>
</feature>
<feature type="transmembrane region" description="Helical" evidence="1">
    <location>
        <begin position="211"/>
        <end position="231"/>
    </location>
</feature>
<feature type="transmembrane region" description="Helical" evidence="1">
    <location>
        <begin position="239"/>
        <end position="259"/>
    </location>
</feature>
<accession>B1I2Y8</accession>
<keyword id="KW-0046">Antibiotic resistance</keyword>
<keyword id="KW-1003">Cell membrane</keyword>
<keyword id="KW-0133">Cell shape</keyword>
<keyword id="KW-0961">Cell wall biogenesis/degradation</keyword>
<keyword id="KW-0378">Hydrolase</keyword>
<keyword id="KW-0472">Membrane</keyword>
<keyword id="KW-0573">Peptidoglycan synthesis</keyword>
<keyword id="KW-1185">Reference proteome</keyword>
<keyword id="KW-0812">Transmembrane</keyword>
<keyword id="KW-1133">Transmembrane helix</keyword>
<sequence length="261" mass="28373">MNPFEGIVMGIVQGLTEFLPVSSSAHLVLVPWLFGFETPGLVFDVALHLGTLVAVLVYFWRDWLRLVQAGSRGVGTADGRLFWFLVVATIPGVVVGYFLEDIVETTLRAPLLIGVLLIMMGGVLYLADRYGGQVKRLLDIRFGDAMAIGLSQALAIIPGVSRSGITMATARLRGVERAAAARFSFLLSTPIIFGAGLMQMLKMDPGLLNLSFVLGVFTSAVVGFLAIWFLISWVSRHSFNIFVIYRVLLGLTVIVIALLRG</sequence>